<proteinExistence type="inferred from homology"/>
<sequence length="273" mass="29800">MSDMHSLLIAAILGVVEGLTEFLPVSSTGHMIIVGHLLGFEGDTAKTFEVVIQLGSILAVVVMFWRRLFGLIGIHFGRPLQHEGENKGRLTLIHILLGMIPAVVLGLLFHDTIKSLFNPINVMYALVVGGLLLIAAECLKPKEPRAPGLDDMTYRQAFMIGCFQCLALWPGFSRSGATISGGMLMGVSRYAASEFSFLLAVPMMMGATALDLYKSWGFLTTGDIPMFAVGFITAFVVALIAIKTFLQLIKRISFIPFAIYRFIVAAAVYVVFF</sequence>
<evidence type="ECO:0000255" key="1">
    <source>
        <dbReference type="HAMAP-Rule" id="MF_01006"/>
    </source>
</evidence>
<comment type="function">
    <text evidence="1">Catalyzes the dephosphorylation of undecaprenyl diphosphate (UPP). Confers resistance to bacitracin.</text>
</comment>
<comment type="catalytic activity">
    <reaction evidence="1">
        <text>di-trans,octa-cis-undecaprenyl diphosphate + H2O = di-trans,octa-cis-undecaprenyl phosphate + phosphate + H(+)</text>
        <dbReference type="Rhea" id="RHEA:28094"/>
        <dbReference type="ChEBI" id="CHEBI:15377"/>
        <dbReference type="ChEBI" id="CHEBI:15378"/>
        <dbReference type="ChEBI" id="CHEBI:43474"/>
        <dbReference type="ChEBI" id="CHEBI:58405"/>
        <dbReference type="ChEBI" id="CHEBI:60392"/>
        <dbReference type="EC" id="3.6.1.27"/>
    </reaction>
</comment>
<comment type="subcellular location">
    <subcellularLocation>
        <location evidence="1">Cell inner membrane</location>
        <topology evidence="1">Multi-pass membrane protein</topology>
    </subcellularLocation>
</comment>
<comment type="miscellaneous">
    <text>Bacitracin is thought to be involved in the inhibition of peptidoglycan synthesis by sequestering undecaprenyl diphosphate, thereby reducing the pool of lipid carrier available.</text>
</comment>
<comment type="similarity">
    <text evidence="1">Belongs to the UppP family.</text>
</comment>
<dbReference type="EC" id="3.6.1.27" evidence="1"/>
<dbReference type="EMBL" id="FM180568">
    <property type="protein sequence ID" value="CAS10898.1"/>
    <property type="molecule type" value="Genomic_DNA"/>
</dbReference>
<dbReference type="SMR" id="B7UIW5"/>
<dbReference type="KEGG" id="ecg:E2348C_3350"/>
<dbReference type="HOGENOM" id="CLU_060296_2_0_6"/>
<dbReference type="Proteomes" id="UP000008205">
    <property type="component" value="Chromosome"/>
</dbReference>
<dbReference type="GO" id="GO:0005886">
    <property type="term" value="C:plasma membrane"/>
    <property type="evidence" value="ECO:0007669"/>
    <property type="project" value="UniProtKB-SubCell"/>
</dbReference>
<dbReference type="GO" id="GO:0050380">
    <property type="term" value="F:undecaprenyl-diphosphatase activity"/>
    <property type="evidence" value="ECO:0007669"/>
    <property type="project" value="UniProtKB-UniRule"/>
</dbReference>
<dbReference type="GO" id="GO:0071555">
    <property type="term" value="P:cell wall organization"/>
    <property type="evidence" value="ECO:0007669"/>
    <property type="project" value="UniProtKB-KW"/>
</dbReference>
<dbReference type="GO" id="GO:0009252">
    <property type="term" value="P:peptidoglycan biosynthetic process"/>
    <property type="evidence" value="ECO:0007669"/>
    <property type="project" value="UniProtKB-KW"/>
</dbReference>
<dbReference type="GO" id="GO:0008360">
    <property type="term" value="P:regulation of cell shape"/>
    <property type="evidence" value="ECO:0007669"/>
    <property type="project" value="UniProtKB-KW"/>
</dbReference>
<dbReference type="GO" id="GO:0046677">
    <property type="term" value="P:response to antibiotic"/>
    <property type="evidence" value="ECO:0007669"/>
    <property type="project" value="UniProtKB-UniRule"/>
</dbReference>
<dbReference type="HAMAP" id="MF_01006">
    <property type="entry name" value="Undec_diphosphatase"/>
    <property type="match status" value="1"/>
</dbReference>
<dbReference type="InterPro" id="IPR003824">
    <property type="entry name" value="UppP"/>
</dbReference>
<dbReference type="NCBIfam" id="NF001388">
    <property type="entry name" value="PRK00281.1-1"/>
    <property type="match status" value="1"/>
</dbReference>
<dbReference type="NCBIfam" id="NF001389">
    <property type="entry name" value="PRK00281.1-2"/>
    <property type="match status" value="1"/>
</dbReference>
<dbReference type="NCBIfam" id="NF001390">
    <property type="entry name" value="PRK00281.1-4"/>
    <property type="match status" value="1"/>
</dbReference>
<dbReference type="NCBIfam" id="TIGR00753">
    <property type="entry name" value="undec_PP_bacA"/>
    <property type="match status" value="1"/>
</dbReference>
<dbReference type="PANTHER" id="PTHR30622">
    <property type="entry name" value="UNDECAPRENYL-DIPHOSPHATASE"/>
    <property type="match status" value="1"/>
</dbReference>
<dbReference type="PANTHER" id="PTHR30622:SF3">
    <property type="entry name" value="UNDECAPRENYL-DIPHOSPHATASE"/>
    <property type="match status" value="1"/>
</dbReference>
<dbReference type="Pfam" id="PF02673">
    <property type="entry name" value="BacA"/>
    <property type="match status" value="1"/>
</dbReference>
<organism>
    <name type="scientific">Escherichia coli O127:H6 (strain E2348/69 / EPEC)</name>
    <dbReference type="NCBI Taxonomy" id="574521"/>
    <lineage>
        <taxon>Bacteria</taxon>
        <taxon>Pseudomonadati</taxon>
        <taxon>Pseudomonadota</taxon>
        <taxon>Gammaproteobacteria</taxon>
        <taxon>Enterobacterales</taxon>
        <taxon>Enterobacteriaceae</taxon>
        <taxon>Escherichia</taxon>
    </lineage>
</organism>
<accession>B7UIW5</accession>
<gene>
    <name evidence="1" type="primary">uppP</name>
    <name type="ordered locus">E2348C_3350</name>
</gene>
<feature type="chain" id="PRO_1000148812" description="Undecaprenyl-diphosphatase">
    <location>
        <begin position="1"/>
        <end position="273"/>
    </location>
</feature>
<feature type="transmembrane region" description="Helical" evidence="1">
    <location>
        <begin position="6"/>
        <end position="26"/>
    </location>
</feature>
<feature type="transmembrane region" description="Helical" evidence="1">
    <location>
        <begin position="45"/>
        <end position="65"/>
    </location>
</feature>
<feature type="transmembrane region" description="Helical" evidence="1">
    <location>
        <begin position="90"/>
        <end position="110"/>
    </location>
</feature>
<feature type="transmembrane region" description="Helical" evidence="1">
    <location>
        <begin position="116"/>
        <end position="136"/>
    </location>
</feature>
<feature type="transmembrane region" description="Helical" evidence="1">
    <location>
        <begin position="190"/>
        <end position="210"/>
    </location>
</feature>
<feature type="transmembrane region" description="Helical" evidence="1">
    <location>
        <begin position="222"/>
        <end position="242"/>
    </location>
</feature>
<feature type="transmembrane region" description="Helical" evidence="1">
    <location>
        <begin position="252"/>
        <end position="272"/>
    </location>
</feature>
<reference key="1">
    <citation type="journal article" date="2009" name="J. Bacteriol.">
        <title>Complete genome sequence and comparative genome analysis of enteropathogenic Escherichia coli O127:H6 strain E2348/69.</title>
        <authorList>
            <person name="Iguchi A."/>
            <person name="Thomson N.R."/>
            <person name="Ogura Y."/>
            <person name="Saunders D."/>
            <person name="Ooka T."/>
            <person name="Henderson I.R."/>
            <person name="Harris D."/>
            <person name="Asadulghani M."/>
            <person name="Kurokawa K."/>
            <person name="Dean P."/>
            <person name="Kenny B."/>
            <person name="Quail M.A."/>
            <person name="Thurston S."/>
            <person name="Dougan G."/>
            <person name="Hayashi T."/>
            <person name="Parkhill J."/>
            <person name="Frankel G."/>
        </authorList>
    </citation>
    <scope>NUCLEOTIDE SEQUENCE [LARGE SCALE GENOMIC DNA]</scope>
    <source>
        <strain>E2348/69 / EPEC</strain>
    </source>
</reference>
<keyword id="KW-0046">Antibiotic resistance</keyword>
<keyword id="KW-0997">Cell inner membrane</keyword>
<keyword id="KW-1003">Cell membrane</keyword>
<keyword id="KW-0133">Cell shape</keyword>
<keyword id="KW-0961">Cell wall biogenesis/degradation</keyword>
<keyword id="KW-0378">Hydrolase</keyword>
<keyword id="KW-0472">Membrane</keyword>
<keyword id="KW-0573">Peptidoglycan synthesis</keyword>
<keyword id="KW-1185">Reference proteome</keyword>
<keyword id="KW-0812">Transmembrane</keyword>
<keyword id="KW-1133">Transmembrane helix</keyword>
<protein>
    <recommendedName>
        <fullName evidence="1">Undecaprenyl-diphosphatase</fullName>
        <ecNumber evidence="1">3.6.1.27</ecNumber>
    </recommendedName>
    <alternativeName>
        <fullName evidence="1">Bacitracin resistance protein</fullName>
    </alternativeName>
    <alternativeName>
        <fullName evidence="1">Undecaprenyl pyrophosphate phosphatase</fullName>
    </alternativeName>
</protein>
<name>UPPP_ECO27</name>